<name>MUTS_BRUC2</name>
<sequence length="910" mass="98836">MEAKVEEKEPEPVENAGPDAPVRLTPMMEQYIEIKAANVDSLLFYRMGDFYELFFDDAVAASAALGITLTKRGKHLGEDIPMCGVPVHAADDYLQKLIAKGYRVAVCEQVEDPAEAKKRGSKSVVKRDVIRLVTPGTLTEEKLLDPAQANFLMAMGRTRGDGALALAWIDISTGTFRVAETTPDRLFADIMRVDPRELVVADSAFHDEELRPVFDLIGKAVTPQPATLFDSAAAQTRIQHYFNVATLDGFGQFSRPELSAISGAIAYIEKTQISERPPLMRPEREHEGGTLFIDPATRASLELARTMSGNRDGSLLKAIDRTVTGGGARLLAERLTAPLTSPKEIALRLDSVSWCLSEQTLCEALRLELKGVPDMPRALSRLAVGRGGPRDLGALACGFEAAGGIASLLDGALLPDELAAAREAIEKMPAGFAAHLDRALADELPLLKRDGGFVREGYNSELDEMRALRDQSRRVIAGLQADYIEETGIKSLKIKHNNVLGYFIEVTANNSGAMTDTDEAKSRFIHRQTMANAMRFTTTELAELESKIANAADRALSIELAIFEELTAEAVAHADSIRAAASALSVFDVSTALAVLAEERGYCRPHVDDSLSFNIVAGRHPVVEQALRRQAANPFVANDCDLSPQRDGGDGAIWLLTGPNMGGKSTFLRQNALIAILAQMGSFVPAGSAHIGVVDRLFSRVGASDDLARGRSTFMVEMVETAAILNQAGEHSLVILDEIGRGTATFDGLSIAWAAVEYLHEKNRCRALFATHFHEMTALSEKLERLSNVTMRVKEWDNDVIFLHEVAKGAADRSYGVQVARLAGLPEAVVNRARDVLHQLEAGETSGKADRLIDDLPLFSVMLQQEKPKPQIQAKDSELANAVAAISPDELTPREALDLIYKLKELAGKA</sequence>
<reference key="1">
    <citation type="submission" date="2007-10" db="EMBL/GenBank/DDBJ databases">
        <title>Brucella canis ATCC 23365 whole genome shotgun sequencing project.</title>
        <authorList>
            <person name="Setubal J.C."/>
            <person name="Bowns C."/>
            <person name="Boyle S."/>
            <person name="Crasta O.R."/>
            <person name="Czar M.J."/>
            <person name="Dharmanolla C."/>
            <person name="Gillespie J.J."/>
            <person name="Kenyon R.W."/>
            <person name="Lu J."/>
            <person name="Mane S."/>
            <person name="Mohapatra S."/>
            <person name="Nagrani S."/>
            <person name="Purkayastha A."/>
            <person name="Rajasimha H.K."/>
            <person name="Shallom J.M."/>
            <person name="Shallom S."/>
            <person name="Shukla M."/>
            <person name="Snyder E.E."/>
            <person name="Sobral B.W."/>
            <person name="Wattam A.R."/>
            <person name="Will R."/>
            <person name="Williams K."/>
            <person name="Yoo H."/>
            <person name="Bruce D."/>
            <person name="Detter C."/>
            <person name="Munk C."/>
            <person name="Brettin T.S."/>
        </authorList>
    </citation>
    <scope>NUCLEOTIDE SEQUENCE [LARGE SCALE GENOMIC DNA]</scope>
    <source>
        <strain>ATCC 23365 / NCTC 10854 / RM-666</strain>
    </source>
</reference>
<evidence type="ECO:0000255" key="1">
    <source>
        <dbReference type="HAMAP-Rule" id="MF_00096"/>
    </source>
</evidence>
<evidence type="ECO:0000256" key="2">
    <source>
        <dbReference type="SAM" id="MobiDB-lite"/>
    </source>
</evidence>
<protein>
    <recommendedName>
        <fullName evidence="1">DNA mismatch repair protein MutS</fullName>
    </recommendedName>
</protein>
<accession>A9M792</accession>
<organism>
    <name type="scientific">Brucella canis (strain ATCC 23365 / NCTC 10854 / RM-666)</name>
    <dbReference type="NCBI Taxonomy" id="483179"/>
    <lineage>
        <taxon>Bacteria</taxon>
        <taxon>Pseudomonadati</taxon>
        <taxon>Pseudomonadota</taxon>
        <taxon>Alphaproteobacteria</taxon>
        <taxon>Hyphomicrobiales</taxon>
        <taxon>Brucellaceae</taxon>
        <taxon>Brucella/Ochrobactrum group</taxon>
        <taxon>Brucella</taxon>
    </lineage>
</organism>
<gene>
    <name evidence="1" type="primary">mutS</name>
    <name type="ordered locus">BCAN_A0152</name>
</gene>
<dbReference type="EMBL" id="CP000872">
    <property type="protein sequence ID" value="ABX61251.1"/>
    <property type="molecule type" value="Genomic_DNA"/>
</dbReference>
<dbReference type="RefSeq" id="WP_004691341.1">
    <property type="nucleotide sequence ID" value="NC_010103.1"/>
</dbReference>
<dbReference type="SMR" id="A9M792"/>
<dbReference type="GeneID" id="55589938"/>
<dbReference type="KEGG" id="bcs:BCAN_A0152"/>
<dbReference type="HOGENOM" id="CLU_002472_4_0_5"/>
<dbReference type="PhylomeDB" id="A9M792"/>
<dbReference type="Proteomes" id="UP000001385">
    <property type="component" value="Chromosome I"/>
</dbReference>
<dbReference type="GO" id="GO:0005829">
    <property type="term" value="C:cytosol"/>
    <property type="evidence" value="ECO:0007669"/>
    <property type="project" value="TreeGrafter"/>
</dbReference>
<dbReference type="GO" id="GO:0005524">
    <property type="term" value="F:ATP binding"/>
    <property type="evidence" value="ECO:0007669"/>
    <property type="project" value="UniProtKB-UniRule"/>
</dbReference>
<dbReference type="GO" id="GO:0140664">
    <property type="term" value="F:ATP-dependent DNA damage sensor activity"/>
    <property type="evidence" value="ECO:0007669"/>
    <property type="project" value="InterPro"/>
</dbReference>
<dbReference type="GO" id="GO:0003684">
    <property type="term" value="F:damaged DNA binding"/>
    <property type="evidence" value="ECO:0007669"/>
    <property type="project" value="UniProtKB-UniRule"/>
</dbReference>
<dbReference type="GO" id="GO:0030983">
    <property type="term" value="F:mismatched DNA binding"/>
    <property type="evidence" value="ECO:0007669"/>
    <property type="project" value="InterPro"/>
</dbReference>
<dbReference type="GO" id="GO:0006298">
    <property type="term" value="P:mismatch repair"/>
    <property type="evidence" value="ECO:0007669"/>
    <property type="project" value="UniProtKB-UniRule"/>
</dbReference>
<dbReference type="CDD" id="cd03284">
    <property type="entry name" value="ABC_MutS1"/>
    <property type="match status" value="1"/>
</dbReference>
<dbReference type="FunFam" id="3.40.1170.10:FF:000001">
    <property type="entry name" value="DNA mismatch repair protein MutS"/>
    <property type="match status" value="1"/>
</dbReference>
<dbReference type="FunFam" id="3.40.50.300:FF:000870">
    <property type="entry name" value="MutS protein homolog 4"/>
    <property type="match status" value="1"/>
</dbReference>
<dbReference type="Gene3D" id="1.10.1420.10">
    <property type="match status" value="2"/>
</dbReference>
<dbReference type="Gene3D" id="6.10.140.430">
    <property type="match status" value="1"/>
</dbReference>
<dbReference type="Gene3D" id="3.40.1170.10">
    <property type="entry name" value="DNA repair protein MutS, domain I"/>
    <property type="match status" value="1"/>
</dbReference>
<dbReference type="Gene3D" id="3.30.420.110">
    <property type="entry name" value="MutS, connector domain"/>
    <property type="match status" value="1"/>
</dbReference>
<dbReference type="Gene3D" id="3.40.50.300">
    <property type="entry name" value="P-loop containing nucleotide triphosphate hydrolases"/>
    <property type="match status" value="1"/>
</dbReference>
<dbReference type="HAMAP" id="MF_00096">
    <property type="entry name" value="MutS"/>
    <property type="match status" value="1"/>
</dbReference>
<dbReference type="InterPro" id="IPR005748">
    <property type="entry name" value="DNA_mismatch_repair_MutS"/>
</dbReference>
<dbReference type="InterPro" id="IPR007695">
    <property type="entry name" value="DNA_mismatch_repair_MutS-lik_N"/>
</dbReference>
<dbReference type="InterPro" id="IPR017261">
    <property type="entry name" value="DNA_mismatch_repair_MutS/MSH"/>
</dbReference>
<dbReference type="InterPro" id="IPR000432">
    <property type="entry name" value="DNA_mismatch_repair_MutS_C"/>
</dbReference>
<dbReference type="InterPro" id="IPR007861">
    <property type="entry name" value="DNA_mismatch_repair_MutS_clamp"/>
</dbReference>
<dbReference type="InterPro" id="IPR007696">
    <property type="entry name" value="DNA_mismatch_repair_MutS_core"/>
</dbReference>
<dbReference type="InterPro" id="IPR016151">
    <property type="entry name" value="DNA_mismatch_repair_MutS_N"/>
</dbReference>
<dbReference type="InterPro" id="IPR036187">
    <property type="entry name" value="DNA_mismatch_repair_MutS_sf"/>
</dbReference>
<dbReference type="InterPro" id="IPR007860">
    <property type="entry name" value="DNA_mmatch_repair_MutS_con_dom"/>
</dbReference>
<dbReference type="InterPro" id="IPR045076">
    <property type="entry name" value="MutS"/>
</dbReference>
<dbReference type="InterPro" id="IPR036678">
    <property type="entry name" value="MutS_con_dom_sf"/>
</dbReference>
<dbReference type="InterPro" id="IPR027417">
    <property type="entry name" value="P-loop_NTPase"/>
</dbReference>
<dbReference type="NCBIfam" id="TIGR01070">
    <property type="entry name" value="mutS1"/>
    <property type="match status" value="1"/>
</dbReference>
<dbReference type="NCBIfam" id="NF003810">
    <property type="entry name" value="PRK05399.1"/>
    <property type="match status" value="1"/>
</dbReference>
<dbReference type="PANTHER" id="PTHR11361:SF34">
    <property type="entry name" value="DNA MISMATCH REPAIR PROTEIN MSH1, MITOCHONDRIAL"/>
    <property type="match status" value="1"/>
</dbReference>
<dbReference type="PANTHER" id="PTHR11361">
    <property type="entry name" value="DNA MISMATCH REPAIR PROTEIN MUTS FAMILY MEMBER"/>
    <property type="match status" value="1"/>
</dbReference>
<dbReference type="Pfam" id="PF01624">
    <property type="entry name" value="MutS_I"/>
    <property type="match status" value="1"/>
</dbReference>
<dbReference type="Pfam" id="PF05188">
    <property type="entry name" value="MutS_II"/>
    <property type="match status" value="1"/>
</dbReference>
<dbReference type="Pfam" id="PF05192">
    <property type="entry name" value="MutS_III"/>
    <property type="match status" value="1"/>
</dbReference>
<dbReference type="Pfam" id="PF05190">
    <property type="entry name" value="MutS_IV"/>
    <property type="match status" value="1"/>
</dbReference>
<dbReference type="Pfam" id="PF00488">
    <property type="entry name" value="MutS_V"/>
    <property type="match status" value="1"/>
</dbReference>
<dbReference type="PIRSF" id="PIRSF037677">
    <property type="entry name" value="DNA_mis_repair_Msh6"/>
    <property type="match status" value="1"/>
</dbReference>
<dbReference type="SMART" id="SM00534">
    <property type="entry name" value="MUTSac"/>
    <property type="match status" value="1"/>
</dbReference>
<dbReference type="SMART" id="SM00533">
    <property type="entry name" value="MUTSd"/>
    <property type="match status" value="1"/>
</dbReference>
<dbReference type="SUPFAM" id="SSF55271">
    <property type="entry name" value="DNA repair protein MutS, domain I"/>
    <property type="match status" value="1"/>
</dbReference>
<dbReference type="SUPFAM" id="SSF53150">
    <property type="entry name" value="DNA repair protein MutS, domain II"/>
    <property type="match status" value="1"/>
</dbReference>
<dbReference type="SUPFAM" id="SSF48334">
    <property type="entry name" value="DNA repair protein MutS, domain III"/>
    <property type="match status" value="1"/>
</dbReference>
<dbReference type="SUPFAM" id="SSF52540">
    <property type="entry name" value="P-loop containing nucleoside triphosphate hydrolases"/>
    <property type="match status" value="1"/>
</dbReference>
<dbReference type="PROSITE" id="PS00486">
    <property type="entry name" value="DNA_MISMATCH_REPAIR_2"/>
    <property type="match status" value="1"/>
</dbReference>
<feature type="chain" id="PRO_0000335123" description="DNA mismatch repair protein MutS">
    <location>
        <begin position="1"/>
        <end position="910"/>
    </location>
</feature>
<feature type="region of interest" description="Disordered" evidence="2">
    <location>
        <begin position="1"/>
        <end position="21"/>
    </location>
</feature>
<feature type="compositionally biased region" description="Basic and acidic residues" evidence="2">
    <location>
        <begin position="1"/>
        <end position="11"/>
    </location>
</feature>
<feature type="binding site" evidence="1">
    <location>
        <begin position="658"/>
        <end position="665"/>
    </location>
    <ligand>
        <name>ATP</name>
        <dbReference type="ChEBI" id="CHEBI:30616"/>
    </ligand>
</feature>
<keyword id="KW-0067">ATP-binding</keyword>
<keyword id="KW-0227">DNA damage</keyword>
<keyword id="KW-0234">DNA repair</keyword>
<keyword id="KW-0238">DNA-binding</keyword>
<keyword id="KW-0547">Nucleotide-binding</keyword>
<keyword id="KW-1185">Reference proteome</keyword>
<proteinExistence type="inferred from homology"/>
<comment type="function">
    <text evidence="1">This protein is involved in the repair of mismatches in DNA. It is possible that it carries out the mismatch recognition step. This protein has a weak ATPase activity.</text>
</comment>
<comment type="similarity">
    <text evidence="1">Belongs to the DNA mismatch repair MutS family.</text>
</comment>